<dbReference type="EMBL" id="DS028168">
    <property type="protein sequence ID" value="EEY66630.1"/>
    <property type="molecule type" value="Genomic_DNA"/>
</dbReference>
<dbReference type="RefSeq" id="XP_002896931.1">
    <property type="nucleotide sequence ID" value="XM_002896885.1"/>
</dbReference>
<dbReference type="SMR" id="D0NVF3"/>
<dbReference type="EnsemblProtists" id="PITG_16705T0">
    <property type="protein sequence ID" value="PITG_16705T0"/>
    <property type="gene ID" value="PITG_16705"/>
</dbReference>
<dbReference type="GeneID" id="9465494"/>
<dbReference type="KEGG" id="pif:PITG_16705"/>
<dbReference type="VEuPathDB" id="FungiDB:PITG_16705"/>
<dbReference type="eggNOG" id="ENOG502RANW">
    <property type="taxonomic scope" value="Eukaryota"/>
</dbReference>
<dbReference type="HOGENOM" id="CLU_021192_3_0_1"/>
<dbReference type="InParanoid" id="D0NVF3"/>
<dbReference type="OMA" id="WERYLSA"/>
<dbReference type="OrthoDB" id="128291at2759"/>
<dbReference type="Proteomes" id="UP000006643">
    <property type="component" value="Partially assembled WGS sequence"/>
</dbReference>
<dbReference type="GO" id="GO:0005576">
    <property type="term" value="C:extracellular region"/>
    <property type="evidence" value="ECO:0007669"/>
    <property type="project" value="UniProtKB-SubCell"/>
</dbReference>
<dbReference type="GO" id="GO:0030430">
    <property type="term" value="C:host cell cytoplasm"/>
    <property type="evidence" value="ECO:0007669"/>
    <property type="project" value="UniProtKB-SubCell"/>
</dbReference>
<dbReference type="InterPro" id="IPR054463">
    <property type="entry name" value="PexRD54_WY"/>
</dbReference>
<dbReference type="Pfam" id="PF22748">
    <property type="entry name" value="PexRD54_WY"/>
    <property type="match status" value="2"/>
</dbReference>
<protein>
    <recommendedName>
        <fullName evidence="6">RxLR effector protein PITG_16705</fullName>
    </recommendedName>
</protein>
<proteinExistence type="evidence at transcript level"/>
<comment type="function">
    <text evidence="5">Effector that enhances P.infestans colonization of Nicotiana benthamiana leaves.</text>
</comment>
<comment type="subcellular location">
    <subcellularLocation>
        <location evidence="5">Secreted</location>
    </subcellularLocation>
    <subcellularLocation>
        <location evidence="5">Host cytoplasm</location>
    </subcellularLocation>
</comment>
<comment type="induction">
    <text evidence="2 3 4">Expression is induced during host plant infection.</text>
</comment>
<comment type="domain">
    <text evidence="8">The RxLR-dEER motif acts to carry the protein into the host cell cytoplasm through binding to cell surface phosphatidylinositol-3-phosphate.</text>
</comment>
<comment type="similarity">
    <text evidence="7">Belongs to the RxLR effector family.</text>
</comment>
<feature type="signal peptide" evidence="1">
    <location>
        <begin position="1"/>
        <end position="20"/>
    </location>
</feature>
<feature type="chain" id="PRO_5003013103" description="RxLR effector protein PITG_16705">
    <location>
        <begin position="21"/>
        <end position="678"/>
    </location>
</feature>
<feature type="short sequence motif" description="RxLR-dEER" evidence="8">
    <location>
        <begin position="46"/>
        <end position="61"/>
    </location>
</feature>
<name>RXLRW_PHYIT</name>
<sequence length="678" mass="76870">MHLFFLTAVAFVITSVSVDASVAKDPRGHAPNRTEVDTVNASSSTRLLRKNSTVDLVGEERAPSIVENIKALVKSSAVTPAKLQQWLDERLPAGLVFKNMNLDEPNIFSLLHEPNFAKWVQYADDLSAKSSHKESSVISTLTSLHGDKVVYDTIQAAKLYPQLSELALKLEKDQIRFWIATRKDPSVVFEALNLNWAGISIFPKPEFSAWLKYVDDVNARHPKEAPLSIIPTLKQRFSRGDEAGTDVLLKLIANGKATTEAKTVANKVESALFDFWLNSRETPDKVMDAFKYGTTTQAFLGSPRWKEWERYLSAYNARYPEKKATAIETLTRKYGDAQLLDTLIGASSKGETKTLAAKLQAQQFDRWMNLKESPLDVYNRLRSSYGDTAFFNEPQLNVWVSYMNVFVDKNPSKVDKMFLELGDTFGDMRLFRVLGEAKKFPNLESTATKLQMEKASTLFASGKSPEGIFKVLALDNVGDDILSNTLFHKWLAYLQKFNKEHPNNQESWFDMLRISYQPFGVERIIETGRKNPLTRLMAEKVENAYHNYWLDIKMEPKTAFRSLHLDESGEKLLADPKFNTWVQYLKTFNDRYPNEKTTVIDGLRDNSHDIALLRMFSAAKNDPSTEKLATDLQSALILKWQDAKKTPEELKRVFVGVPAADEMLDRYIKLLAVASSTP</sequence>
<keyword id="KW-1035">Host cytoplasm</keyword>
<keyword id="KW-1185">Reference proteome</keyword>
<keyword id="KW-0964">Secreted</keyword>
<keyword id="KW-0732">Signal</keyword>
<keyword id="KW-0843">Virulence</keyword>
<evidence type="ECO:0000255" key="1"/>
<evidence type="ECO:0000269" key="2">
    <source>
    </source>
</evidence>
<evidence type="ECO:0000269" key="3">
    <source>
    </source>
</evidence>
<evidence type="ECO:0000269" key="4">
    <source>
    </source>
</evidence>
<evidence type="ECO:0000269" key="5">
    <source>
    </source>
</evidence>
<evidence type="ECO:0000303" key="6">
    <source>
    </source>
</evidence>
<evidence type="ECO:0000305" key="7"/>
<evidence type="ECO:0000305" key="8">
    <source>
    </source>
</evidence>
<gene>
    <name type="ORF">PITG_16705</name>
</gene>
<reference key="1">
    <citation type="journal article" date="2009" name="Nature">
        <title>Genome sequence and analysis of the Irish potato famine pathogen Phytophthora infestans.</title>
        <authorList>
            <consortium name="The Broad Institute Genome Sequencing Platform"/>
            <person name="Haas B.J."/>
            <person name="Kamoun S."/>
            <person name="Zody M.C."/>
            <person name="Jiang R.H."/>
            <person name="Handsaker R.E."/>
            <person name="Cano L.M."/>
            <person name="Grabherr M."/>
            <person name="Kodira C.D."/>
            <person name="Raffaele S."/>
            <person name="Torto-Alalibo T."/>
            <person name="Bozkurt T.O."/>
            <person name="Ah-Fong A.M."/>
            <person name="Alvarado L."/>
            <person name="Anderson V.L."/>
            <person name="Armstrong M.R."/>
            <person name="Avrova A."/>
            <person name="Baxter L."/>
            <person name="Beynon J."/>
            <person name="Boevink P.C."/>
            <person name="Bollmann S.R."/>
            <person name="Bos J.I."/>
            <person name="Bulone V."/>
            <person name="Cai G."/>
            <person name="Cakir C."/>
            <person name="Carrington J.C."/>
            <person name="Chawner M."/>
            <person name="Conti L."/>
            <person name="Costanzo S."/>
            <person name="Ewan R."/>
            <person name="Fahlgren N."/>
            <person name="Fischbach M.A."/>
            <person name="Fugelstad J."/>
            <person name="Gilroy E.M."/>
            <person name="Gnerre S."/>
            <person name="Green P.J."/>
            <person name="Grenville-Briggs L.J."/>
            <person name="Griffith J."/>
            <person name="Grunwald N.J."/>
            <person name="Horn K."/>
            <person name="Horner N.R."/>
            <person name="Hu C.H."/>
            <person name="Huitema E."/>
            <person name="Jeong D.H."/>
            <person name="Jones A.M."/>
            <person name="Jones J.D."/>
            <person name="Jones R.W."/>
            <person name="Karlsson E.K."/>
            <person name="Kunjeti S.G."/>
            <person name="Lamour K."/>
            <person name="Liu Z."/>
            <person name="Ma L."/>
            <person name="Maclean D."/>
            <person name="Chibucos M.C."/>
            <person name="McDonald H."/>
            <person name="McWalters J."/>
            <person name="Meijer H.J."/>
            <person name="Morgan W."/>
            <person name="Morris P.F."/>
            <person name="Munro C.A."/>
            <person name="O'Neill K."/>
            <person name="Ospina-Giraldo M."/>
            <person name="Pinzon A."/>
            <person name="Pritchard L."/>
            <person name="Ramsahoye B."/>
            <person name="Ren Q."/>
            <person name="Restrepo S."/>
            <person name="Roy S."/>
            <person name="Sadanandom A."/>
            <person name="Savidor A."/>
            <person name="Schornack S."/>
            <person name="Schwartz D.C."/>
            <person name="Schumann U.D."/>
            <person name="Schwessinger B."/>
            <person name="Seyer L."/>
            <person name="Sharpe T."/>
            <person name="Silvar C."/>
            <person name="Song J."/>
            <person name="Studholme D.J."/>
            <person name="Sykes S."/>
            <person name="Thines M."/>
            <person name="van de Vondervoort P.J."/>
            <person name="Phuntumart V."/>
            <person name="Wawra S."/>
            <person name="Weide R."/>
            <person name="Win J."/>
            <person name="Young C."/>
            <person name="Zhou S."/>
            <person name="Fry W."/>
            <person name="Meyers B.C."/>
            <person name="van West P."/>
            <person name="Ristaino J."/>
            <person name="Govers F."/>
            <person name="Birch P.R."/>
            <person name="Whisson S.C."/>
            <person name="Judelson H.S."/>
            <person name="Nusbaum C."/>
        </authorList>
    </citation>
    <scope>NUCLEOTIDE SEQUENCE [LARGE SCALE GENOMIC DNA]</scope>
    <scope>INDUCTION</scope>
    <source>
        <strain>T30-4</strain>
    </source>
</reference>
<reference key="2">
    <citation type="journal article" date="2017" name="BMC Genomics">
        <title>RNA-seq of life stages of the oomycete Phytophthora infestans reveals dynamic changes in metabolic, signal transduction, and pathogenesis genes and a major role for calcium signaling in development.</title>
        <authorList>
            <person name="Ah-Fong A.M."/>
            <person name="Kim K.S."/>
            <person name="Judelson H.S."/>
        </authorList>
    </citation>
    <scope>INDUCTION</scope>
</reference>
<reference key="3">
    <citation type="journal article" date="2017" name="Front. Plant Sci.">
        <title>Conserved RXLR effector genes of Phytophthora infestans expressed at the early stage of potato infection are suppressive to host defense.</title>
        <authorList>
            <person name="Yin J."/>
            <person name="Gu B."/>
            <person name="Huang G."/>
            <person name="Tian Y."/>
            <person name="Quan J."/>
            <person name="Lindqvist-Kreuze H."/>
            <person name="Shan W."/>
        </authorList>
    </citation>
    <scope>INDUCTION</scope>
    <scope>DOMAIN</scope>
</reference>
<reference key="4">
    <citation type="journal article" date="2019" name="J. Exp. Bot.">
        <title>Phytophthora infestans RXLR effectors act in concert at diverse subcellular locations to enhance host colonization.</title>
        <authorList>
            <person name="Wang S."/>
            <person name="McLellan H."/>
            <person name="Bukharova T."/>
            <person name="He Q."/>
            <person name="Murphy F."/>
            <person name="Shi J."/>
            <person name="Sun S."/>
            <person name="van Weymers P."/>
            <person name="Ren Y."/>
            <person name="Thilliez G."/>
            <person name="Wang H."/>
            <person name="Chen X."/>
            <person name="Engelhardt S."/>
            <person name="Vleeshouwers V."/>
            <person name="Gilroy E.M."/>
            <person name="Whisson S.C."/>
            <person name="Hein I."/>
            <person name="Wang X."/>
            <person name="Tian Z."/>
            <person name="Birch P.R.J."/>
            <person name="Boevink P.C."/>
        </authorList>
    </citation>
    <scope>FUNCTION</scope>
    <scope>SUBCELLULAR LOCATION</scope>
</reference>
<accession>D0NVF3</accession>
<organism>
    <name type="scientific">Phytophthora infestans (strain T30-4)</name>
    <name type="common">Potato late blight agent</name>
    <dbReference type="NCBI Taxonomy" id="403677"/>
    <lineage>
        <taxon>Eukaryota</taxon>
        <taxon>Sar</taxon>
        <taxon>Stramenopiles</taxon>
        <taxon>Oomycota</taxon>
        <taxon>Peronosporales</taxon>
        <taxon>Peronosporaceae</taxon>
        <taxon>Phytophthora</taxon>
    </lineage>
</organism>